<reference key="1">
    <citation type="submission" date="2006-08" db="EMBL/GenBank/DDBJ databases">
        <title>Complete sequence of chromosome 1 of Shewanella sp. MR-7.</title>
        <authorList>
            <person name="Copeland A."/>
            <person name="Lucas S."/>
            <person name="Lapidus A."/>
            <person name="Barry K."/>
            <person name="Detter J.C."/>
            <person name="Glavina del Rio T."/>
            <person name="Hammon N."/>
            <person name="Israni S."/>
            <person name="Dalin E."/>
            <person name="Tice H."/>
            <person name="Pitluck S."/>
            <person name="Kiss H."/>
            <person name="Brettin T."/>
            <person name="Bruce D."/>
            <person name="Han C."/>
            <person name="Tapia R."/>
            <person name="Gilna P."/>
            <person name="Schmutz J."/>
            <person name="Larimer F."/>
            <person name="Land M."/>
            <person name="Hauser L."/>
            <person name="Kyrpides N."/>
            <person name="Mikhailova N."/>
            <person name="Nealson K."/>
            <person name="Konstantinidis K."/>
            <person name="Klappenbach J."/>
            <person name="Tiedje J."/>
            <person name="Richardson P."/>
        </authorList>
    </citation>
    <scope>NUCLEOTIDE SEQUENCE [LARGE SCALE GENOMIC DNA]</scope>
    <source>
        <strain>MR-7</strain>
    </source>
</reference>
<organism>
    <name type="scientific">Shewanella sp. (strain MR-7)</name>
    <dbReference type="NCBI Taxonomy" id="60481"/>
    <lineage>
        <taxon>Bacteria</taxon>
        <taxon>Pseudomonadati</taxon>
        <taxon>Pseudomonadota</taxon>
        <taxon>Gammaproteobacteria</taxon>
        <taxon>Alteromonadales</taxon>
        <taxon>Shewanellaceae</taxon>
        <taxon>Shewanella</taxon>
    </lineage>
</organism>
<name>EFTS_SHESR</name>
<dbReference type="EMBL" id="CP000444">
    <property type="protein sequence ID" value="ABI43692.1"/>
    <property type="molecule type" value="Genomic_DNA"/>
</dbReference>
<dbReference type="SMR" id="Q0HT63"/>
<dbReference type="KEGG" id="shm:Shewmr7_2707"/>
<dbReference type="HOGENOM" id="CLU_047155_0_2_6"/>
<dbReference type="GO" id="GO:0005737">
    <property type="term" value="C:cytoplasm"/>
    <property type="evidence" value="ECO:0007669"/>
    <property type="project" value="UniProtKB-SubCell"/>
</dbReference>
<dbReference type="GO" id="GO:0003746">
    <property type="term" value="F:translation elongation factor activity"/>
    <property type="evidence" value="ECO:0007669"/>
    <property type="project" value="UniProtKB-UniRule"/>
</dbReference>
<dbReference type="CDD" id="cd14275">
    <property type="entry name" value="UBA_EF-Ts"/>
    <property type="match status" value="1"/>
</dbReference>
<dbReference type="FunFam" id="1.10.286.20:FF:000001">
    <property type="entry name" value="Elongation factor Ts"/>
    <property type="match status" value="1"/>
</dbReference>
<dbReference type="FunFam" id="1.10.8.10:FF:000001">
    <property type="entry name" value="Elongation factor Ts"/>
    <property type="match status" value="1"/>
</dbReference>
<dbReference type="FunFam" id="3.30.479.20:FF:000001">
    <property type="entry name" value="Elongation factor Ts"/>
    <property type="match status" value="1"/>
</dbReference>
<dbReference type="Gene3D" id="1.10.286.20">
    <property type="match status" value="1"/>
</dbReference>
<dbReference type="Gene3D" id="1.10.8.10">
    <property type="entry name" value="DNA helicase RuvA subunit, C-terminal domain"/>
    <property type="match status" value="1"/>
</dbReference>
<dbReference type="Gene3D" id="3.30.479.20">
    <property type="entry name" value="Elongation factor Ts, dimerisation domain"/>
    <property type="match status" value="2"/>
</dbReference>
<dbReference type="HAMAP" id="MF_00050">
    <property type="entry name" value="EF_Ts"/>
    <property type="match status" value="1"/>
</dbReference>
<dbReference type="InterPro" id="IPR036402">
    <property type="entry name" value="EF-Ts_dimer_sf"/>
</dbReference>
<dbReference type="InterPro" id="IPR001816">
    <property type="entry name" value="Transl_elong_EFTs/EF1B"/>
</dbReference>
<dbReference type="InterPro" id="IPR014039">
    <property type="entry name" value="Transl_elong_EFTs/EF1B_dimer"/>
</dbReference>
<dbReference type="InterPro" id="IPR018101">
    <property type="entry name" value="Transl_elong_Ts_CS"/>
</dbReference>
<dbReference type="InterPro" id="IPR009060">
    <property type="entry name" value="UBA-like_sf"/>
</dbReference>
<dbReference type="NCBIfam" id="TIGR00116">
    <property type="entry name" value="tsf"/>
    <property type="match status" value="1"/>
</dbReference>
<dbReference type="PANTHER" id="PTHR11741">
    <property type="entry name" value="ELONGATION FACTOR TS"/>
    <property type="match status" value="1"/>
</dbReference>
<dbReference type="PANTHER" id="PTHR11741:SF0">
    <property type="entry name" value="ELONGATION FACTOR TS, MITOCHONDRIAL"/>
    <property type="match status" value="1"/>
</dbReference>
<dbReference type="Pfam" id="PF00889">
    <property type="entry name" value="EF_TS"/>
    <property type="match status" value="1"/>
</dbReference>
<dbReference type="SUPFAM" id="SSF54713">
    <property type="entry name" value="Elongation factor Ts (EF-Ts), dimerisation domain"/>
    <property type="match status" value="2"/>
</dbReference>
<dbReference type="SUPFAM" id="SSF46934">
    <property type="entry name" value="UBA-like"/>
    <property type="match status" value="1"/>
</dbReference>
<dbReference type="PROSITE" id="PS01126">
    <property type="entry name" value="EF_TS_1"/>
    <property type="match status" value="1"/>
</dbReference>
<dbReference type="PROSITE" id="PS01127">
    <property type="entry name" value="EF_TS_2"/>
    <property type="match status" value="1"/>
</dbReference>
<gene>
    <name evidence="1" type="primary">tsf</name>
    <name type="ordered locus">Shewmr7_2707</name>
</gene>
<feature type="chain" id="PRO_1000006181" description="Elongation factor Ts">
    <location>
        <begin position="1"/>
        <end position="283"/>
    </location>
</feature>
<feature type="region of interest" description="Involved in Mg(2+) ion dislocation from EF-Tu" evidence="1">
    <location>
        <begin position="79"/>
        <end position="82"/>
    </location>
</feature>
<sequence length="283" mass="30458">MAISAAQVKELRERTGAGMMDCKKALEETNGDMELAIDNMRKSGAAKAAKKAGNIAADGTILIKNGEGFAVLLEVNCQTDFVAKDANFLGFANAVLDVAAASKVSLEDLKAQFEEARVALVAKIGENINVRRVEYIDGTQLASYRHGERIGVVVTGEADEETLKHLAMHVAASKPEYVNPEDVPADVVAREQALQIEISMNEGKPAEIAEKMVVGRMKKFTGEISLTGQAYIMEPKKTVGEFLKEKGAKVTNFIRLEVGEGIEKKEEDFAAEVAAQIAASKKA</sequence>
<proteinExistence type="inferred from homology"/>
<keyword id="KW-0963">Cytoplasm</keyword>
<keyword id="KW-0251">Elongation factor</keyword>
<keyword id="KW-0648">Protein biosynthesis</keyword>
<accession>Q0HT63</accession>
<evidence type="ECO:0000255" key="1">
    <source>
        <dbReference type="HAMAP-Rule" id="MF_00050"/>
    </source>
</evidence>
<comment type="function">
    <text evidence="1">Associates with the EF-Tu.GDP complex and induces the exchange of GDP to GTP. It remains bound to the aminoacyl-tRNA.EF-Tu.GTP complex up to the GTP hydrolysis stage on the ribosome.</text>
</comment>
<comment type="subcellular location">
    <subcellularLocation>
        <location evidence="1">Cytoplasm</location>
    </subcellularLocation>
</comment>
<comment type="similarity">
    <text evidence="1">Belongs to the EF-Ts family.</text>
</comment>
<protein>
    <recommendedName>
        <fullName evidence="1">Elongation factor Ts</fullName>
        <shortName evidence="1">EF-Ts</shortName>
    </recommendedName>
</protein>